<evidence type="ECO:0000250" key="1"/>
<evidence type="ECO:0000256" key="2">
    <source>
        <dbReference type="SAM" id="MobiDB-lite"/>
    </source>
</evidence>
<evidence type="ECO:0000305" key="3"/>
<organism>
    <name type="scientific">Mycobacterium tuberculosis (strain CDC 1551 / Oshkosh)</name>
    <dbReference type="NCBI Taxonomy" id="83331"/>
    <lineage>
        <taxon>Bacteria</taxon>
        <taxon>Bacillati</taxon>
        <taxon>Actinomycetota</taxon>
        <taxon>Actinomycetes</taxon>
        <taxon>Mycobacteriales</taxon>
        <taxon>Mycobacteriaceae</taxon>
        <taxon>Mycobacterium</taxon>
        <taxon>Mycobacterium tuberculosis complex</taxon>
    </lineage>
</organism>
<proteinExistence type="inferred from homology"/>
<keyword id="KW-0378">Hydrolase</keyword>
<keyword id="KW-0460">Magnesium</keyword>
<keyword id="KW-0479">Metal-binding</keyword>
<keyword id="KW-1185">Reference proteome</keyword>
<reference key="1">
    <citation type="journal article" date="2002" name="J. Bacteriol.">
        <title>Whole-genome comparison of Mycobacterium tuberculosis clinical and laboratory strains.</title>
        <authorList>
            <person name="Fleischmann R.D."/>
            <person name="Alland D."/>
            <person name="Eisen J.A."/>
            <person name="Carpenter L."/>
            <person name="White O."/>
            <person name="Peterson J.D."/>
            <person name="DeBoy R.T."/>
            <person name="Dodson R.J."/>
            <person name="Gwinn M.L."/>
            <person name="Haft D.H."/>
            <person name="Hickey E.K."/>
            <person name="Kolonay J.F."/>
            <person name="Nelson W.C."/>
            <person name="Umayam L.A."/>
            <person name="Ermolaeva M.D."/>
            <person name="Salzberg S.L."/>
            <person name="Delcher A."/>
            <person name="Utterback T.R."/>
            <person name="Weidman J.F."/>
            <person name="Khouri H.M."/>
            <person name="Gill J."/>
            <person name="Mikula A."/>
            <person name="Bishai W."/>
            <person name="Jacobs W.R. Jr."/>
            <person name="Venter J.C."/>
            <person name="Fraser C.M."/>
        </authorList>
    </citation>
    <scope>NUCLEOTIDE SEQUENCE [LARGE SCALE GENOMIC DNA]</scope>
    <source>
        <strain>CDC 1551 / Oshkosh</strain>
    </source>
</reference>
<accession>P9WGJ0</accession>
<accession>L0TDF7</accession>
<accession>O69629</accession>
<dbReference type="EMBL" id="AE000516">
    <property type="protein sequence ID" value="AAK48125.1"/>
    <property type="molecule type" value="Genomic_DNA"/>
</dbReference>
<dbReference type="PIR" id="F70788">
    <property type="entry name" value="F70788"/>
</dbReference>
<dbReference type="RefSeq" id="WP_003419689.1">
    <property type="nucleotide sequence ID" value="NZ_KK341227.1"/>
</dbReference>
<dbReference type="SMR" id="P9WGJ0"/>
<dbReference type="KEGG" id="mtc:MT3761"/>
<dbReference type="PATRIC" id="fig|83331.31.peg.4050"/>
<dbReference type="HOGENOM" id="CLU_052657_1_0_11"/>
<dbReference type="Proteomes" id="UP000001020">
    <property type="component" value="Chromosome"/>
</dbReference>
<dbReference type="GO" id="GO:0016787">
    <property type="term" value="F:hydrolase activity"/>
    <property type="evidence" value="ECO:0007669"/>
    <property type="project" value="UniProtKB-KW"/>
</dbReference>
<dbReference type="GO" id="GO:0046872">
    <property type="term" value="F:metal ion binding"/>
    <property type="evidence" value="ECO:0007669"/>
    <property type="project" value="UniProtKB-KW"/>
</dbReference>
<dbReference type="CDD" id="cd02612">
    <property type="entry name" value="HAD_PGPPase"/>
    <property type="match status" value="1"/>
</dbReference>
<dbReference type="FunFam" id="3.40.50.1000:FF:000025">
    <property type="entry name" value="HAD hydrolase, family IB"/>
    <property type="match status" value="1"/>
</dbReference>
<dbReference type="Gene3D" id="3.40.50.1000">
    <property type="entry name" value="HAD superfamily/HAD-like"/>
    <property type="match status" value="1"/>
</dbReference>
<dbReference type="Gene3D" id="1.20.1440.100">
    <property type="entry name" value="SG protein - dephosphorylation function"/>
    <property type="match status" value="1"/>
</dbReference>
<dbReference type="InterPro" id="IPR050582">
    <property type="entry name" value="HAD-like_SerB"/>
</dbReference>
<dbReference type="InterPro" id="IPR036412">
    <property type="entry name" value="HAD-like_sf"/>
</dbReference>
<dbReference type="InterPro" id="IPR006385">
    <property type="entry name" value="HAD_hydro_SerB1"/>
</dbReference>
<dbReference type="InterPro" id="IPR023214">
    <property type="entry name" value="HAD_sf"/>
</dbReference>
<dbReference type="NCBIfam" id="TIGR01488">
    <property type="entry name" value="HAD-SF-IB"/>
    <property type="match status" value="1"/>
</dbReference>
<dbReference type="NCBIfam" id="TIGR01490">
    <property type="entry name" value="HAD-SF-IB-hyp1"/>
    <property type="match status" value="1"/>
</dbReference>
<dbReference type="PANTHER" id="PTHR43344:SF13">
    <property type="entry name" value="PHOSPHATASE RV3661-RELATED"/>
    <property type="match status" value="1"/>
</dbReference>
<dbReference type="PANTHER" id="PTHR43344">
    <property type="entry name" value="PHOSPHOSERINE PHOSPHATASE"/>
    <property type="match status" value="1"/>
</dbReference>
<dbReference type="Pfam" id="PF12710">
    <property type="entry name" value="HAD"/>
    <property type="match status" value="1"/>
</dbReference>
<dbReference type="SUPFAM" id="SSF56784">
    <property type="entry name" value="HAD-like"/>
    <property type="match status" value="1"/>
</dbReference>
<feature type="chain" id="PRO_0000428353" description="Uncharacterized protein MT3761">
    <location>
        <begin position="1"/>
        <end position="287"/>
    </location>
</feature>
<feature type="region of interest" description="Disordered" evidence="2">
    <location>
        <begin position="1"/>
        <end position="23"/>
    </location>
</feature>
<feature type="compositionally biased region" description="Low complexity" evidence="2">
    <location>
        <begin position="7"/>
        <end position="23"/>
    </location>
</feature>
<feature type="binding site" evidence="1">
    <location>
        <position position="31"/>
    </location>
    <ligand>
        <name>Mg(2+)</name>
        <dbReference type="ChEBI" id="CHEBI:18420"/>
    </ligand>
</feature>
<feature type="binding site" evidence="1">
    <location>
        <position position="33"/>
    </location>
    <ligand>
        <name>Mg(2+)</name>
        <dbReference type="ChEBI" id="CHEBI:18420"/>
    </ligand>
</feature>
<feature type="binding site" evidence="1">
    <location>
        <position position="204"/>
    </location>
    <ligand>
        <name>Mg(2+)</name>
        <dbReference type="ChEBI" id="CHEBI:18420"/>
    </ligand>
</feature>
<sequence length="287" mass="30711">MTVSDSPAQRQTPPQTPGGTAPRARTAAFFDLDKTIIAKSSTLAFSKPFFAQGLLNRRAVLKSSYAQFIFLLSGADHDQMDRMRTHLTNMCAGWDVAQVRSIVNETLHDIVTPLVFAEAADLIAAHKLCGRDVVVVSASGEEIVGPIARALGATHAMATRMIVEDGKYTGEVAFYCYGEGKAQAIRELAASEGYPLEHCYAYSDSITDLPMLEAVGHASVVNPDRGLRKEASVRGWPVLSFSRPVSLRDRIPAPSAAAIATTAAVGISALAAGAVTYALLRRFAFQP</sequence>
<protein>
    <recommendedName>
        <fullName>Uncharacterized protein MT3761</fullName>
    </recommendedName>
</protein>
<comment type="similarity">
    <text evidence="3">Belongs to the HAD-like hydrolase superfamily. SerB family.</text>
</comment>
<gene>
    <name type="ordered locus">MT3761</name>
</gene>
<name>Y3661_MYCTO</name>